<gene>
    <name type="primary">psbV2</name>
    <name type="ordered locus">CYB_2539</name>
</gene>
<reference key="1">
    <citation type="journal article" date="2007" name="ISME J.">
        <title>Population level functional diversity in a microbial community revealed by comparative genomic and metagenomic analyses.</title>
        <authorList>
            <person name="Bhaya D."/>
            <person name="Grossman A.R."/>
            <person name="Steunou A.-S."/>
            <person name="Khuri N."/>
            <person name="Cohan F.M."/>
            <person name="Hamamura N."/>
            <person name="Melendrez M.C."/>
            <person name="Bateson M.M."/>
            <person name="Ward D.M."/>
            <person name="Heidelberg J.F."/>
        </authorList>
    </citation>
    <scope>NUCLEOTIDE SEQUENCE [LARGE SCALE GENOMIC DNA]</scope>
    <source>
        <strain>JA-2-3B'a(2-13)</strain>
    </source>
</reference>
<comment type="function">
    <text evidence="1">Possible low-potential cytochrome c.</text>
</comment>
<comment type="cofactor">
    <cofactor evidence="1">
        <name>heme c</name>
        <dbReference type="ChEBI" id="CHEBI:61717"/>
    </cofactor>
    <text evidence="1">Binds 1 heme c group covalently per subunit.</text>
</comment>
<comment type="subcellular location">
    <subcellularLocation>
        <location evidence="4">Cellular thylakoid membrane</location>
        <topology evidence="4">Peripheral membrane protein</topology>
        <orientation evidence="4">Lumenal side</orientation>
    </subcellularLocation>
</comment>
<comment type="similarity">
    <text evidence="4">Belongs to the cytochrome c family. PsbV subfamily.</text>
</comment>
<dbReference type="EMBL" id="CP000240">
    <property type="protein sequence ID" value="ABD03471.1"/>
    <property type="molecule type" value="Genomic_DNA"/>
</dbReference>
<dbReference type="SMR" id="Q2JIS7"/>
<dbReference type="STRING" id="321332.CYB_2539"/>
<dbReference type="KEGG" id="cyb:CYB_2539"/>
<dbReference type="eggNOG" id="COG2010">
    <property type="taxonomic scope" value="Bacteria"/>
</dbReference>
<dbReference type="HOGENOM" id="CLU_104149_0_0_3"/>
<dbReference type="OrthoDB" id="486949at2"/>
<dbReference type="Proteomes" id="UP000001938">
    <property type="component" value="Chromosome"/>
</dbReference>
<dbReference type="GO" id="GO:0009523">
    <property type="term" value="C:photosystem II"/>
    <property type="evidence" value="ECO:0007669"/>
    <property type="project" value="UniProtKB-KW"/>
</dbReference>
<dbReference type="GO" id="GO:0031676">
    <property type="term" value="C:plasma membrane-derived thylakoid membrane"/>
    <property type="evidence" value="ECO:0007669"/>
    <property type="project" value="UniProtKB-SubCell"/>
</dbReference>
<dbReference type="GO" id="GO:0009055">
    <property type="term" value="F:electron transfer activity"/>
    <property type="evidence" value="ECO:0007669"/>
    <property type="project" value="InterPro"/>
</dbReference>
<dbReference type="GO" id="GO:0020037">
    <property type="term" value="F:heme binding"/>
    <property type="evidence" value="ECO:0007669"/>
    <property type="project" value="InterPro"/>
</dbReference>
<dbReference type="GO" id="GO:0046872">
    <property type="term" value="F:metal ion binding"/>
    <property type="evidence" value="ECO:0007669"/>
    <property type="project" value="UniProtKB-KW"/>
</dbReference>
<dbReference type="GO" id="GO:0015979">
    <property type="term" value="P:photosynthesis"/>
    <property type="evidence" value="ECO:0007669"/>
    <property type="project" value="UniProtKB-KW"/>
</dbReference>
<dbReference type="Gene3D" id="1.10.760.10">
    <property type="entry name" value="Cytochrome c-like domain"/>
    <property type="match status" value="1"/>
</dbReference>
<dbReference type="InterPro" id="IPR009056">
    <property type="entry name" value="Cyt_c-like_dom"/>
</dbReference>
<dbReference type="InterPro" id="IPR036909">
    <property type="entry name" value="Cyt_c-like_dom_sf"/>
</dbReference>
<dbReference type="InterPro" id="IPR029490">
    <property type="entry name" value="Cytochrom_C550"/>
</dbReference>
<dbReference type="NCBIfam" id="TIGR03046">
    <property type="entry name" value="PS_II_psbV2"/>
    <property type="match status" value="1"/>
</dbReference>
<dbReference type="Pfam" id="PF14495">
    <property type="entry name" value="Cytochrom_C550"/>
    <property type="match status" value="1"/>
</dbReference>
<dbReference type="SUPFAM" id="SSF46626">
    <property type="entry name" value="Cytochrome c"/>
    <property type="match status" value="1"/>
</dbReference>
<dbReference type="PROSITE" id="PS51007">
    <property type="entry name" value="CYTC"/>
    <property type="match status" value="1"/>
</dbReference>
<evidence type="ECO:0000250" key="1">
    <source>
        <dbReference type="UniProtKB" id="Q8DJE2"/>
    </source>
</evidence>
<evidence type="ECO:0000255" key="2"/>
<evidence type="ECO:0000255" key="3">
    <source>
        <dbReference type="PROSITE-ProRule" id="PRU00433"/>
    </source>
</evidence>
<evidence type="ECO:0000305" key="4"/>
<feature type="signal peptide" evidence="2">
    <location>
        <begin position="1"/>
        <end position="38"/>
    </location>
</feature>
<feature type="chain" id="PRO_0000295605" description="Cytochrome c-550-like protein">
    <location>
        <begin position="39"/>
        <end position="165"/>
    </location>
</feature>
<feature type="binding site" description="covalent" evidence="3">
    <location>
        <position position="83"/>
    </location>
    <ligand>
        <name>heme c</name>
        <dbReference type="ChEBI" id="CHEBI:61717"/>
    </ligand>
</feature>
<feature type="binding site" description="covalent" evidence="3">
    <location>
        <position position="86"/>
    </location>
    <ligand>
        <name>heme c</name>
        <dbReference type="ChEBI" id="CHEBI:61717"/>
    </ligand>
</feature>
<feature type="binding site" description="axial binding residue" evidence="3">
    <location>
        <position position="87"/>
    </location>
    <ligand>
        <name>heme c</name>
        <dbReference type="ChEBI" id="CHEBI:61717"/>
    </ligand>
    <ligandPart>
        <name>Fe</name>
        <dbReference type="ChEBI" id="CHEBI:18248"/>
    </ligandPart>
</feature>
<feature type="binding site" evidence="1">
    <location>
        <position position="137"/>
    </location>
    <ligand>
        <name>heme c</name>
        <dbReference type="ChEBI" id="CHEBI:61717"/>
    </ligand>
    <ligandPart>
        <name>Fe</name>
        <dbReference type="ChEBI" id="CHEBI:18248"/>
    </ligandPart>
</feature>
<protein>
    <recommendedName>
        <fullName>Cytochrome c-550-like protein</fullName>
    </recommendedName>
</protein>
<accession>Q2JIS7</accession>
<name>PSBV2_SYNJB</name>
<organism>
    <name type="scientific">Synechococcus sp. (strain JA-2-3B'a(2-13))</name>
    <name type="common">Cyanobacteria bacterium Yellowstone B-Prime</name>
    <dbReference type="NCBI Taxonomy" id="321332"/>
    <lineage>
        <taxon>Bacteria</taxon>
        <taxon>Bacillati</taxon>
        <taxon>Cyanobacteriota</taxon>
        <taxon>Cyanophyceae</taxon>
        <taxon>Synechococcales</taxon>
        <taxon>Synechococcaceae</taxon>
        <taxon>Synechococcus</taxon>
    </lineage>
</organism>
<keyword id="KW-0249">Electron transport</keyword>
<keyword id="KW-0349">Heme</keyword>
<keyword id="KW-0408">Iron</keyword>
<keyword id="KW-0472">Membrane</keyword>
<keyword id="KW-0479">Metal-binding</keyword>
<keyword id="KW-0602">Photosynthesis</keyword>
<keyword id="KW-0604">Photosystem II</keyword>
<keyword id="KW-1185">Reference proteome</keyword>
<keyword id="KW-0732">Signal</keyword>
<keyword id="KW-0793">Thylakoid</keyword>
<keyword id="KW-0813">Transport</keyword>
<sequence>MPHLDQKLPMRWRIPSRLWAWVGILALLWLGLASPVAARIDPYVNQYLRVSGPVELPLDAAGHTLTFTPEQLTDGKNRFQSACLNCHVGGATLPAPNISLSLKDLRGATPPRDTLQALMEYQRDPRSYDGSDSSYGCRPVPPSWMDDEAVNYPAPTAKRYGAGFQ</sequence>
<proteinExistence type="inferred from homology"/>